<evidence type="ECO:0000255" key="1">
    <source>
        <dbReference type="HAMAP-Rule" id="MF_03012"/>
    </source>
</evidence>
<evidence type="ECO:0000255" key="2">
    <source>
        <dbReference type="PROSITE-ProRule" id="PRU01185"/>
    </source>
</evidence>
<evidence type="ECO:0000256" key="3">
    <source>
        <dbReference type="SAM" id="MobiDB-lite"/>
    </source>
</evidence>
<proteinExistence type="inferred from homology"/>
<reference key="1">
    <citation type="journal article" date="2005" name="Nature">
        <title>The genome sequence of the rice blast fungus Magnaporthe grisea.</title>
        <authorList>
            <person name="Dean R.A."/>
            <person name="Talbot N.J."/>
            <person name="Ebbole D.J."/>
            <person name="Farman M.L."/>
            <person name="Mitchell T.K."/>
            <person name="Orbach M.J."/>
            <person name="Thon M.R."/>
            <person name="Kulkarni R."/>
            <person name="Xu J.-R."/>
            <person name="Pan H."/>
            <person name="Read N.D."/>
            <person name="Lee Y.-H."/>
            <person name="Carbone I."/>
            <person name="Brown D."/>
            <person name="Oh Y.Y."/>
            <person name="Donofrio N."/>
            <person name="Jeong J.S."/>
            <person name="Soanes D.M."/>
            <person name="Djonovic S."/>
            <person name="Kolomiets E."/>
            <person name="Rehmeyer C."/>
            <person name="Li W."/>
            <person name="Harding M."/>
            <person name="Kim S."/>
            <person name="Lebrun M.-H."/>
            <person name="Bohnert H."/>
            <person name="Coughlan S."/>
            <person name="Butler J."/>
            <person name="Calvo S.E."/>
            <person name="Ma L.-J."/>
            <person name="Nicol R."/>
            <person name="Purcell S."/>
            <person name="Nusbaum C."/>
            <person name="Galagan J.E."/>
            <person name="Birren B.W."/>
        </authorList>
    </citation>
    <scope>NUCLEOTIDE SEQUENCE [LARGE SCALE GENOMIC DNA]</scope>
    <source>
        <strain>70-15 / ATCC MYA-4617 / FGSC 8958</strain>
    </source>
</reference>
<dbReference type="EMBL" id="CM001232">
    <property type="protein sequence ID" value="EHA54767.1"/>
    <property type="molecule type" value="Genomic_DNA"/>
</dbReference>
<dbReference type="RefSeq" id="XP_003714574.1">
    <property type="nucleotide sequence ID" value="XM_003714526.1"/>
</dbReference>
<dbReference type="SMR" id="A4RK68"/>
<dbReference type="STRING" id="242507.A4RK68"/>
<dbReference type="EnsemblFungi" id="MGG_01595T0">
    <property type="protein sequence ID" value="MGG_01595T0"/>
    <property type="gene ID" value="MGG_01595"/>
</dbReference>
<dbReference type="GeneID" id="2679451"/>
<dbReference type="KEGG" id="mgr:MGG_01595"/>
<dbReference type="VEuPathDB" id="FungiDB:MGG_01595"/>
<dbReference type="eggNOG" id="KOG2753">
    <property type="taxonomic scope" value="Eukaryota"/>
</dbReference>
<dbReference type="HOGENOM" id="CLU_035254_0_0_1"/>
<dbReference type="InParanoid" id="A4RK68"/>
<dbReference type="OMA" id="FNDEHKG"/>
<dbReference type="OrthoDB" id="10267031at2759"/>
<dbReference type="Proteomes" id="UP000009058">
    <property type="component" value="Chromosome 2"/>
</dbReference>
<dbReference type="GO" id="GO:0016282">
    <property type="term" value="C:eukaryotic 43S preinitiation complex"/>
    <property type="evidence" value="ECO:0007669"/>
    <property type="project" value="UniProtKB-UniRule"/>
</dbReference>
<dbReference type="GO" id="GO:0033290">
    <property type="term" value="C:eukaryotic 48S preinitiation complex"/>
    <property type="evidence" value="ECO:0007669"/>
    <property type="project" value="UniProtKB-UniRule"/>
</dbReference>
<dbReference type="GO" id="GO:0071541">
    <property type="term" value="C:eukaryotic translation initiation factor 3 complex, eIF3m"/>
    <property type="evidence" value="ECO:0007669"/>
    <property type="project" value="UniProtKB-UniRule"/>
</dbReference>
<dbReference type="GO" id="GO:0003743">
    <property type="term" value="F:translation initiation factor activity"/>
    <property type="evidence" value="ECO:0007669"/>
    <property type="project" value="UniProtKB-UniRule"/>
</dbReference>
<dbReference type="GO" id="GO:0001732">
    <property type="term" value="P:formation of cytoplasmic translation initiation complex"/>
    <property type="evidence" value="ECO:0007669"/>
    <property type="project" value="UniProtKB-UniRule"/>
</dbReference>
<dbReference type="HAMAP" id="MF_03012">
    <property type="entry name" value="eIF3m"/>
    <property type="match status" value="1"/>
</dbReference>
<dbReference type="InterPro" id="IPR016024">
    <property type="entry name" value="ARM-type_fold"/>
</dbReference>
<dbReference type="InterPro" id="IPR045237">
    <property type="entry name" value="COPS7/eIF3m"/>
</dbReference>
<dbReference type="InterPro" id="IPR027528">
    <property type="entry name" value="eIF3m"/>
</dbReference>
<dbReference type="InterPro" id="IPR000717">
    <property type="entry name" value="PCI_dom"/>
</dbReference>
<dbReference type="PANTHER" id="PTHR15350">
    <property type="entry name" value="COP9 SIGNALOSOME COMPLEX SUBUNIT 7/DENDRITIC CELL PROTEIN GA17"/>
    <property type="match status" value="1"/>
</dbReference>
<dbReference type="PANTHER" id="PTHR15350:SF2">
    <property type="entry name" value="EUKARYOTIC TRANSLATION INITIATION FACTOR 3 SUBUNIT M"/>
    <property type="match status" value="1"/>
</dbReference>
<dbReference type="Pfam" id="PF01399">
    <property type="entry name" value="PCI"/>
    <property type="match status" value="1"/>
</dbReference>
<dbReference type="SMART" id="SM00088">
    <property type="entry name" value="PINT"/>
    <property type="match status" value="1"/>
</dbReference>
<dbReference type="SUPFAM" id="SSF48371">
    <property type="entry name" value="ARM repeat"/>
    <property type="match status" value="1"/>
</dbReference>
<dbReference type="PROSITE" id="PS50250">
    <property type="entry name" value="PCI"/>
    <property type="match status" value="1"/>
</dbReference>
<keyword id="KW-0963">Cytoplasm</keyword>
<keyword id="KW-0396">Initiation factor</keyword>
<keyword id="KW-0648">Protein biosynthesis</keyword>
<keyword id="KW-1185">Reference proteome</keyword>
<accession>A4RK68</accession>
<accession>G4MTX3</accession>
<sequence>MTASYQPQLVFVDGSFAELAQDMASVLQISDEIQPLLDSEKESEALTKIVSESKKLNAIPEKEFTGAYNLLVHLVLQSKEPKKHLPTICQNLTRPVTSSPQHGAQLALFELTSIFNLLKPNDPVRFNVFIQIIRFYKIHSIPISDHLKSALKQLPRWLQSWELDEEDQRKMYSEVIEVMTAAGEEEEAYQHILKALRTFDSEDAEDYTSEEAQQLALRALRSAISSPTRLSFEDIRALPAVHALSESHPVHYQLLQIFGEQDLDDYDDFREEHEGFIEKENLDNEVLYRKMRLLTFASLAAASMQTREISYNSITKALQIPSEDVEMWAIDVIRAGLVEGKLSQKKKVFLIHSVRYRVFGEKQWRQLASSLEKTKKTVSTLLQTLRREEANAQQEAERKLVEASTQHNNDRGNQRRGGNRGQQHRERNDNDD</sequence>
<protein>
    <recommendedName>
        <fullName evidence="1">Eukaryotic translation initiation factor 3 subunit M</fullName>
        <shortName evidence="1">eIF3m</shortName>
    </recommendedName>
</protein>
<comment type="function">
    <text evidence="1">Component of the eukaryotic translation initiation factor 3 (eIF-3) complex, which is involved in protein synthesis of a specialized repertoire of mRNAs and, together with other initiation factors, stimulates binding of mRNA and methionyl-tRNAi to the 40S ribosome. The eIF-3 complex specifically targets and initiates translation of a subset of mRNAs involved in cell proliferation.</text>
</comment>
<comment type="subunit">
    <text evidence="1">Component of the eukaryotic translation initiation factor 3 (eIF-3) complex.</text>
</comment>
<comment type="subcellular location">
    <subcellularLocation>
        <location evidence="1">Cytoplasm</location>
    </subcellularLocation>
</comment>
<comment type="similarity">
    <text evidence="1">Belongs to the eIF-3 subunit M family.</text>
</comment>
<feature type="chain" id="PRO_0000366020" description="Eukaryotic translation initiation factor 3 subunit M">
    <location>
        <begin position="1"/>
        <end position="432"/>
    </location>
</feature>
<feature type="domain" description="PCI" evidence="2">
    <location>
        <begin position="184"/>
        <end position="356"/>
    </location>
</feature>
<feature type="region of interest" description="Disordered" evidence="3">
    <location>
        <begin position="392"/>
        <end position="432"/>
    </location>
</feature>
<feature type="compositionally biased region" description="Basic and acidic residues" evidence="3">
    <location>
        <begin position="392"/>
        <end position="401"/>
    </location>
</feature>
<feature type="compositionally biased region" description="Basic and acidic residues" evidence="3">
    <location>
        <begin position="423"/>
        <end position="432"/>
    </location>
</feature>
<organism>
    <name type="scientific">Pyricularia oryzae (strain 70-15 / ATCC MYA-4617 / FGSC 8958)</name>
    <name type="common">Rice blast fungus</name>
    <name type="synonym">Magnaporthe oryzae</name>
    <dbReference type="NCBI Taxonomy" id="242507"/>
    <lineage>
        <taxon>Eukaryota</taxon>
        <taxon>Fungi</taxon>
        <taxon>Dikarya</taxon>
        <taxon>Ascomycota</taxon>
        <taxon>Pezizomycotina</taxon>
        <taxon>Sordariomycetes</taxon>
        <taxon>Sordariomycetidae</taxon>
        <taxon>Magnaporthales</taxon>
        <taxon>Pyriculariaceae</taxon>
        <taxon>Pyricularia</taxon>
    </lineage>
</organism>
<gene>
    <name type="ORF">MGG_01595</name>
</gene>
<name>EIF3M_PYRO7</name>